<evidence type="ECO:0000250" key="1"/>
<evidence type="ECO:0000255" key="2"/>
<evidence type="ECO:0000256" key="3">
    <source>
        <dbReference type="SAM" id="MobiDB-lite"/>
    </source>
</evidence>
<evidence type="ECO:0000305" key="4"/>
<organism>
    <name type="scientific">Phaseolus vulgaris</name>
    <name type="common">Kidney bean</name>
    <name type="synonym">French bean</name>
    <dbReference type="NCBI Taxonomy" id="3885"/>
    <lineage>
        <taxon>Eukaryota</taxon>
        <taxon>Viridiplantae</taxon>
        <taxon>Streptophyta</taxon>
        <taxon>Embryophyta</taxon>
        <taxon>Tracheophyta</taxon>
        <taxon>Spermatophyta</taxon>
        <taxon>Magnoliopsida</taxon>
        <taxon>eudicotyledons</taxon>
        <taxon>Gunneridae</taxon>
        <taxon>Pentapetalae</taxon>
        <taxon>rosids</taxon>
        <taxon>fabids</taxon>
        <taxon>Fabales</taxon>
        <taxon>Fabaceae</taxon>
        <taxon>Papilionoideae</taxon>
        <taxon>50 kb inversion clade</taxon>
        <taxon>NPAAA clade</taxon>
        <taxon>indigoferoid/millettioid clade</taxon>
        <taxon>Phaseoleae</taxon>
        <taxon>Phaseolus</taxon>
    </lineage>
</organism>
<keyword id="KW-0150">Chloroplast</keyword>
<keyword id="KW-0342">GTP-binding</keyword>
<keyword id="KW-0396">Initiation factor</keyword>
<keyword id="KW-0547">Nucleotide-binding</keyword>
<keyword id="KW-0934">Plastid</keyword>
<keyword id="KW-0648">Protein biosynthesis</keyword>
<keyword id="KW-0809">Transit peptide</keyword>
<name>IF2C_PHAVU</name>
<sequence length="1012" mass="108791">MLILVGSKQGTMSSLASPVSLGSLMGVSSSGRSHSGVRRVSFSRGNCKGRKRWHCLSLSVCRYSVTTTDFIADQGNSVSLDSNSNSSSSSKSGGDDGTGFVLKPPPKPVLKAPDNRMTHLGPSRTTGDVEERNKVIESLGEVLEKAEKLGSSKVNGDKNNGSVNKPVRNNANASPRTERPVNSAASLKSKTLKSVWRKGDSVASVQKVVKEVPKPSYNKNEEEKSQTRGGEKVVSQTRAPQPPSKPQPLKPQQPSKPQPALLSKPSIAPPPVKKPVVLRDKGAAETSVKSKEKKSPILIDKFASKKPVVDPLIAQAVLAPPKPGKAPSPGKFKDDFRKKGALAGGGRRRRILDDEDVIQDASELNVSIPGAATARKGRKWSKASRKAARLQAARDAAPVKVEILEVGDSGMLVEELAYCLATSEGEILGYLYSKGIKPDGVQTIDKDMVKMICKEYDVEVIDADPVKVEGLVKKREILDEDDLDKLKDRPPVITIMGHVDHGKTTLLDYIRKSKVAASEAGGITQGIGAYKVQVPFDGKTLPCVFLDTPGHEAFGAMRARGASVTDIAVIVVAADDGIRSQTNEAIAHAKAAGVPIVIAINKIDKDGANPERVMQELSSIGLMPEDWGGNTPMVPISALKGKNVDDLLETVMLVAELQELKANPDRSAKGTVIEAGLDKSKGPLATFIVQNGSLRRGDIVVCWRSFWKGRALFDDGGKRVDEATPSIPVQVIGLNNVPIAGDVFEVVESLDAARERAETRAESLRNERISAKAGDGKITLSSLASAVSSGKLSGLDLHQLNIILKVDLQGSIEAVRKALQVLPQENVTLKFLLEATGDVNTSDVDLAVASKAIIMGFNAXTPGSVKSYADNKAVEIRLYRVIYELIDDVRKAMEGLLEPVEEQLTIGSAVVRAVFSSGSGRVAGCMVTEGKVLKDCGIRVKRKGKIVHVGIIDSLRRVKEIVKEVNAGLECGLGLEDFDDWEEGDIIEPSTQLRRRGPLKRPQHQWQLLWRE</sequence>
<reference key="1">
    <citation type="journal article" date="2001" name="J. Biol. Chem.">
        <title>A cDNA for nuclear-encoded chloroplast translational initiation factor 2 from a higher plant is able to complement an infB Escherichia coli null mutant.</title>
        <authorList>
            <person name="Campos F."/>
            <person name="Garcia-Gomez B.I."/>
            <person name="Solorzano R.M."/>
            <person name="Salazar E."/>
            <person name="Estevez J."/>
            <person name="Leon P."/>
            <person name="Alvarez-Buylla E.R."/>
            <person name="Covarrubias A.A."/>
        </authorList>
    </citation>
    <scope>NUCLEOTIDE SEQUENCE [GENOMIC DNA]</scope>
</reference>
<accession>P57997</accession>
<feature type="transit peptide" description="Chloroplast" evidence="2">
    <location>
        <begin position="1"/>
        <end status="unknown"/>
    </location>
</feature>
<feature type="chain" id="PRO_0000014478" description="Translation initiation factor IF-2, chloroplastic">
    <location>
        <begin status="unknown"/>
        <end position="1012"/>
    </location>
</feature>
<feature type="domain" description="tr-type G">
    <location>
        <begin position="488"/>
        <end position="661"/>
    </location>
</feature>
<feature type="region of interest" description="Disordered" evidence="3">
    <location>
        <begin position="75"/>
        <end position="132"/>
    </location>
</feature>
<feature type="region of interest" description="Disordered" evidence="3">
    <location>
        <begin position="147"/>
        <end position="294"/>
    </location>
</feature>
<feature type="region of interest" description="Disordered" evidence="3">
    <location>
        <begin position="319"/>
        <end position="340"/>
    </location>
</feature>
<feature type="region of interest" description="G1" evidence="1">
    <location>
        <begin position="497"/>
        <end position="504"/>
    </location>
</feature>
<feature type="region of interest" description="G2" evidence="1">
    <location>
        <begin position="522"/>
        <end position="526"/>
    </location>
</feature>
<feature type="region of interest" description="G3" evidence="1">
    <location>
        <begin position="547"/>
        <end position="550"/>
    </location>
</feature>
<feature type="region of interest" description="G4" evidence="1">
    <location>
        <begin position="601"/>
        <end position="604"/>
    </location>
</feature>
<feature type="region of interest" description="G5" evidence="1">
    <location>
        <begin position="637"/>
        <end position="639"/>
    </location>
</feature>
<feature type="compositionally biased region" description="Low complexity" evidence="3">
    <location>
        <begin position="75"/>
        <end position="102"/>
    </location>
</feature>
<feature type="compositionally biased region" description="Polar residues" evidence="3">
    <location>
        <begin position="152"/>
        <end position="175"/>
    </location>
</feature>
<feature type="compositionally biased region" description="Low complexity" evidence="3">
    <location>
        <begin position="183"/>
        <end position="194"/>
    </location>
</feature>
<feature type="compositionally biased region" description="Basic and acidic residues" evidence="3">
    <location>
        <begin position="208"/>
        <end position="231"/>
    </location>
</feature>
<feature type="compositionally biased region" description="Pro residues" evidence="3">
    <location>
        <begin position="240"/>
        <end position="257"/>
    </location>
</feature>
<feature type="compositionally biased region" description="Basic and acidic residues" evidence="3">
    <location>
        <begin position="277"/>
        <end position="294"/>
    </location>
</feature>
<feature type="binding site" evidence="1">
    <location>
        <begin position="497"/>
        <end position="504"/>
    </location>
    <ligand>
        <name>GTP</name>
        <dbReference type="ChEBI" id="CHEBI:37565"/>
    </ligand>
</feature>
<feature type="binding site" evidence="1">
    <location>
        <begin position="547"/>
        <end position="551"/>
    </location>
    <ligand>
        <name>GTP</name>
        <dbReference type="ChEBI" id="CHEBI:37565"/>
    </ligand>
</feature>
<feature type="binding site" evidence="1">
    <location>
        <begin position="601"/>
        <end position="604"/>
    </location>
    <ligand>
        <name>GTP</name>
        <dbReference type="ChEBI" id="CHEBI:37565"/>
    </ligand>
</feature>
<protein>
    <recommendedName>
        <fullName>Translation initiation factor IF-2, chloroplastic</fullName>
    </recommendedName>
    <alternativeName>
        <fullName>PvIF2cp</fullName>
    </alternativeName>
</protein>
<dbReference type="EMBL" id="AF324244">
    <property type="protein sequence ID" value="AAK09431.1"/>
    <property type="molecule type" value="Genomic_DNA"/>
</dbReference>
<dbReference type="eggNOG" id="KOG1145">
    <property type="taxonomic scope" value="Eukaryota"/>
</dbReference>
<dbReference type="GO" id="GO:0009507">
    <property type="term" value="C:chloroplast"/>
    <property type="evidence" value="ECO:0007669"/>
    <property type="project" value="UniProtKB-SubCell"/>
</dbReference>
<dbReference type="GO" id="GO:0005525">
    <property type="term" value="F:GTP binding"/>
    <property type="evidence" value="ECO:0007669"/>
    <property type="project" value="UniProtKB-KW"/>
</dbReference>
<dbReference type="GO" id="GO:0003924">
    <property type="term" value="F:GTPase activity"/>
    <property type="evidence" value="ECO:0007669"/>
    <property type="project" value="InterPro"/>
</dbReference>
<dbReference type="GO" id="GO:0003743">
    <property type="term" value="F:translation initiation factor activity"/>
    <property type="evidence" value="ECO:0007669"/>
    <property type="project" value="UniProtKB-KW"/>
</dbReference>
<dbReference type="CDD" id="cd01887">
    <property type="entry name" value="IF2_eIF5B"/>
    <property type="match status" value="1"/>
</dbReference>
<dbReference type="CDD" id="cd03702">
    <property type="entry name" value="IF2_mtIF2_II"/>
    <property type="match status" value="1"/>
</dbReference>
<dbReference type="CDD" id="cd03692">
    <property type="entry name" value="mtIF2_IVc"/>
    <property type="match status" value="1"/>
</dbReference>
<dbReference type="FunFam" id="2.40.30.10:FF:000008">
    <property type="entry name" value="Translation initiation factor IF-2"/>
    <property type="match status" value="1"/>
</dbReference>
<dbReference type="FunFam" id="2.40.30.10:FF:000054">
    <property type="entry name" value="Translation initiation factor IF-2"/>
    <property type="match status" value="1"/>
</dbReference>
<dbReference type="FunFam" id="3.40.50.10050:FF:000001">
    <property type="entry name" value="Translation initiation factor IF-2"/>
    <property type="match status" value="1"/>
</dbReference>
<dbReference type="FunFam" id="3.40.50.300:FF:000019">
    <property type="entry name" value="Translation initiation factor IF-2"/>
    <property type="match status" value="1"/>
</dbReference>
<dbReference type="Gene3D" id="3.40.50.300">
    <property type="entry name" value="P-loop containing nucleotide triphosphate hydrolases"/>
    <property type="match status" value="1"/>
</dbReference>
<dbReference type="Gene3D" id="2.40.30.10">
    <property type="entry name" value="Translation factors"/>
    <property type="match status" value="2"/>
</dbReference>
<dbReference type="Gene3D" id="3.40.50.10050">
    <property type="entry name" value="Translation initiation factor IF- 2, domain 3"/>
    <property type="match status" value="1"/>
</dbReference>
<dbReference type="HAMAP" id="MF_00100_B">
    <property type="entry name" value="IF_2_B"/>
    <property type="match status" value="1"/>
</dbReference>
<dbReference type="InterPro" id="IPR053905">
    <property type="entry name" value="EF-G-like_DII"/>
</dbReference>
<dbReference type="InterPro" id="IPR044145">
    <property type="entry name" value="IF2_II"/>
</dbReference>
<dbReference type="InterPro" id="IPR006847">
    <property type="entry name" value="IF2_N"/>
</dbReference>
<dbReference type="InterPro" id="IPR027417">
    <property type="entry name" value="P-loop_NTPase"/>
</dbReference>
<dbReference type="InterPro" id="IPR005225">
    <property type="entry name" value="Small_GTP-bd"/>
</dbReference>
<dbReference type="InterPro" id="IPR000795">
    <property type="entry name" value="T_Tr_GTP-bd_dom"/>
</dbReference>
<dbReference type="InterPro" id="IPR000178">
    <property type="entry name" value="TF_IF2_bacterial-like"/>
</dbReference>
<dbReference type="InterPro" id="IPR015760">
    <property type="entry name" value="TIF_IF2"/>
</dbReference>
<dbReference type="InterPro" id="IPR023115">
    <property type="entry name" value="TIF_IF2_dom3"/>
</dbReference>
<dbReference type="InterPro" id="IPR036925">
    <property type="entry name" value="TIF_IF2_dom3_sf"/>
</dbReference>
<dbReference type="InterPro" id="IPR009000">
    <property type="entry name" value="Transl_B-barrel_sf"/>
</dbReference>
<dbReference type="NCBIfam" id="TIGR00487">
    <property type="entry name" value="IF-2"/>
    <property type="match status" value="1"/>
</dbReference>
<dbReference type="NCBIfam" id="TIGR00231">
    <property type="entry name" value="small_GTP"/>
    <property type="match status" value="1"/>
</dbReference>
<dbReference type="PANTHER" id="PTHR43381:SF5">
    <property type="entry name" value="TR-TYPE G DOMAIN-CONTAINING PROTEIN"/>
    <property type="match status" value="1"/>
</dbReference>
<dbReference type="PANTHER" id="PTHR43381">
    <property type="entry name" value="TRANSLATION INITIATION FACTOR IF-2-RELATED"/>
    <property type="match status" value="1"/>
</dbReference>
<dbReference type="Pfam" id="PF22042">
    <property type="entry name" value="EF-G_D2"/>
    <property type="match status" value="1"/>
</dbReference>
<dbReference type="Pfam" id="PF00009">
    <property type="entry name" value="GTP_EFTU"/>
    <property type="match status" value="1"/>
</dbReference>
<dbReference type="Pfam" id="PF11987">
    <property type="entry name" value="IF-2"/>
    <property type="match status" value="1"/>
</dbReference>
<dbReference type="Pfam" id="PF04760">
    <property type="entry name" value="IF2_N"/>
    <property type="match status" value="1"/>
</dbReference>
<dbReference type="PRINTS" id="PR00315">
    <property type="entry name" value="ELONGATNFCT"/>
</dbReference>
<dbReference type="SUPFAM" id="SSF52156">
    <property type="entry name" value="Initiation factor IF2/eIF5b, domain 3"/>
    <property type="match status" value="1"/>
</dbReference>
<dbReference type="SUPFAM" id="SSF52540">
    <property type="entry name" value="P-loop containing nucleoside triphosphate hydrolases"/>
    <property type="match status" value="1"/>
</dbReference>
<dbReference type="SUPFAM" id="SSF50447">
    <property type="entry name" value="Translation proteins"/>
    <property type="match status" value="2"/>
</dbReference>
<dbReference type="PROSITE" id="PS51722">
    <property type="entry name" value="G_TR_2"/>
    <property type="match status" value="1"/>
</dbReference>
<dbReference type="PROSITE" id="PS01176">
    <property type="entry name" value="IF2"/>
    <property type="match status" value="1"/>
</dbReference>
<proteinExistence type="evidence at transcript level"/>
<comment type="function">
    <text evidence="1">One of the essential components for the initiation of protein synthesis. Protects formylmethionyl-tRNA from spontaneous hydrolysis and promotes its binding to the 30S ribosomal subunits. Also involved in the hydrolysis of GTP during the formation of the 70S ribosomal complex (By similarity).</text>
</comment>
<comment type="subcellular location">
    <subcellularLocation>
        <location>Plastid</location>
        <location>Chloroplast</location>
    </subcellularLocation>
</comment>
<comment type="induction">
    <text>By light.</text>
</comment>
<comment type="similarity">
    <text evidence="4">Belongs to the TRAFAC class translation factor GTPase superfamily. Classic translation factor GTPase family. IF-2 subfamily.</text>
</comment>
<gene>
    <name type="primary">IF2CP</name>
</gene>